<dbReference type="EC" id="3.1.3.18" evidence="1"/>
<dbReference type="EMBL" id="BA000002">
    <property type="protein sequence ID" value="BAA79744.1"/>
    <property type="molecule type" value="Genomic_DNA"/>
</dbReference>
<dbReference type="PIR" id="H72667">
    <property type="entry name" value="H72667"/>
</dbReference>
<dbReference type="RefSeq" id="WP_010865957.1">
    <property type="nucleotide sequence ID" value="NC_000854.2"/>
</dbReference>
<dbReference type="SMR" id="Q9YE03"/>
<dbReference type="STRING" id="272557.APE_0766"/>
<dbReference type="EnsemblBacteria" id="BAA79744">
    <property type="protein sequence ID" value="BAA79744"/>
    <property type="gene ID" value="APE_0766"/>
</dbReference>
<dbReference type="GeneID" id="1444880"/>
<dbReference type="KEGG" id="ape:APE_0766"/>
<dbReference type="eggNOG" id="arCOG01213">
    <property type="taxonomic scope" value="Archaea"/>
</dbReference>
<dbReference type="Proteomes" id="UP000002518">
    <property type="component" value="Chromosome"/>
</dbReference>
<dbReference type="GO" id="GO:0005829">
    <property type="term" value="C:cytosol"/>
    <property type="evidence" value="ECO:0007669"/>
    <property type="project" value="TreeGrafter"/>
</dbReference>
<dbReference type="GO" id="GO:0000287">
    <property type="term" value="F:magnesium ion binding"/>
    <property type="evidence" value="ECO:0007669"/>
    <property type="project" value="InterPro"/>
</dbReference>
<dbReference type="GO" id="GO:0008967">
    <property type="term" value="F:phosphoglycolate phosphatase activity"/>
    <property type="evidence" value="ECO:0007669"/>
    <property type="project" value="UniProtKB-UniRule"/>
</dbReference>
<dbReference type="CDD" id="cd07514">
    <property type="entry name" value="HAD_Pase"/>
    <property type="match status" value="1"/>
</dbReference>
<dbReference type="Gene3D" id="3.90.1070.10">
    <property type="match status" value="1"/>
</dbReference>
<dbReference type="Gene3D" id="3.40.50.1000">
    <property type="entry name" value="HAD superfamily/HAD-like"/>
    <property type="match status" value="1"/>
</dbReference>
<dbReference type="HAMAP" id="MF_01419">
    <property type="entry name" value="GPH_hydrolase_arch"/>
    <property type="match status" value="1"/>
</dbReference>
<dbReference type="InterPro" id="IPR036412">
    <property type="entry name" value="HAD-like_sf"/>
</dbReference>
<dbReference type="InterPro" id="IPR023214">
    <property type="entry name" value="HAD_sf"/>
</dbReference>
<dbReference type="InterPro" id="IPR006382">
    <property type="entry name" value="PGPase"/>
</dbReference>
<dbReference type="NCBIfam" id="TIGR01487">
    <property type="entry name" value="Pglycolate_arch"/>
    <property type="match status" value="1"/>
</dbReference>
<dbReference type="PANTHER" id="PTHR10000:SF8">
    <property type="entry name" value="HAD SUPERFAMILY HYDROLASE-LIKE, TYPE 3"/>
    <property type="match status" value="1"/>
</dbReference>
<dbReference type="PANTHER" id="PTHR10000">
    <property type="entry name" value="PHOSPHOSERINE PHOSPHATASE"/>
    <property type="match status" value="1"/>
</dbReference>
<dbReference type="Pfam" id="PF08282">
    <property type="entry name" value="Hydrolase_3"/>
    <property type="match status" value="2"/>
</dbReference>
<dbReference type="SUPFAM" id="SSF56784">
    <property type="entry name" value="HAD-like"/>
    <property type="match status" value="1"/>
</dbReference>
<evidence type="ECO:0000255" key="1">
    <source>
        <dbReference type="HAMAP-Rule" id="MF_01419"/>
    </source>
</evidence>
<protein>
    <recommendedName>
        <fullName evidence="1">Phosphoglycolate phosphatase</fullName>
        <shortName evidence="1">PGP</shortName>
        <shortName evidence="1">PGPase</shortName>
        <ecNumber evidence="1">3.1.3.18</ecNumber>
    </recommendedName>
</protein>
<proteinExistence type="inferred from homology"/>
<accession>Q9YE03</accession>
<sequence length="239" mass="24758">MQGLAGSVRVAALDIDGTLTERRGAARLDGCSIAVARLLNDLGVTSILMTGNSLPVARGVAVYLGLEGPVVAENGCVAVVGGERVHICSGRPPEGLVKRIMELGFKPSWQNEYRYHEYSLIPVKAAPGIVERASAIAEEEGYRAIWSGYALHIQPPGGGKARGVGEVLARIGAGWSEVLAIGDGENDVEVLARAGYSGAPGDAAEQAKRAAKIVARSPGARGTLEIIQRVLGGARAPAC</sequence>
<feature type="chain" id="PRO_0000146713" description="Phosphoglycolate phosphatase">
    <location>
        <begin position="1"/>
        <end position="239"/>
    </location>
</feature>
<feature type="active site" description="Nucleophile" evidence="1">
    <location>
        <position position="14"/>
    </location>
</feature>
<feature type="binding site" evidence="1">
    <location>
        <position position="14"/>
    </location>
    <ligand>
        <name>Mg(2+)</name>
        <dbReference type="ChEBI" id="CHEBI:18420"/>
    </ligand>
</feature>
<feature type="binding site" evidence="1">
    <location>
        <position position="16"/>
    </location>
    <ligand>
        <name>Mg(2+)</name>
        <dbReference type="ChEBI" id="CHEBI:18420"/>
    </ligand>
</feature>
<feature type="binding site" evidence="1">
    <location>
        <position position="160"/>
    </location>
    <ligand>
        <name>substrate</name>
    </ligand>
</feature>
<feature type="binding site" evidence="1">
    <location>
        <position position="183"/>
    </location>
    <ligand>
        <name>Mg(2+)</name>
        <dbReference type="ChEBI" id="CHEBI:18420"/>
    </ligand>
</feature>
<feature type="binding site" evidence="1">
    <location>
        <position position="187"/>
    </location>
    <ligand>
        <name>Mg(2+)</name>
        <dbReference type="ChEBI" id="CHEBI:18420"/>
    </ligand>
</feature>
<gene>
    <name type="ordered locus">APE_0766</name>
</gene>
<organism>
    <name type="scientific">Aeropyrum pernix (strain ATCC 700893 / DSM 11879 / JCM 9820 / NBRC 100138 / K1)</name>
    <dbReference type="NCBI Taxonomy" id="272557"/>
    <lineage>
        <taxon>Archaea</taxon>
        <taxon>Thermoproteota</taxon>
        <taxon>Thermoprotei</taxon>
        <taxon>Desulfurococcales</taxon>
        <taxon>Desulfurococcaceae</taxon>
        <taxon>Aeropyrum</taxon>
    </lineage>
</organism>
<keyword id="KW-0119">Carbohydrate metabolism</keyword>
<keyword id="KW-0378">Hydrolase</keyword>
<keyword id="KW-0460">Magnesium</keyword>
<keyword id="KW-0479">Metal-binding</keyword>
<keyword id="KW-1185">Reference proteome</keyword>
<comment type="function">
    <text evidence="1">Catalyzes the dephosphorylation of 2-phosphoglycolate.</text>
</comment>
<comment type="catalytic activity">
    <reaction evidence="1">
        <text>2-phosphoglycolate + H2O = glycolate + phosphate</text>
        <dbReference type="Rhea" id="RHEA:14369"/>
        <dbReference type="ChEBI" id="CHEBI:15377"/>
        <dbReference type="ChEBI" id="CHEBI:29805"/>
        <dbReference type="ChEBI" id="CHEBI:43474"/>
        <dbReference type="ChEBI" id="CHEBI:58033"/>
        <dbReference type="EC" id="3.1.3.18"/>
    </reaction>
</comment>
<comment type="cofactor">
    <cofactor evidence="1">
        <name>Mg(2+)</name>
        <dbReference type="ChEBI" id="CHEBI:18420"/>
    </cofactor>
</comment>
<comment type="similarity">
    <text evidence="1">Belongs to the archaeal SPP-like hydrolase family.</text>
</comment>
<reference key="1">
    <citation type="journal article" date="1999" name="DNA Res.">
        <title>Complete genome sequence of an aerobic hyper-thermophilic crenarchaeon, Aeropyrum pernix K1.</title>
        <authorList>
            <person name="Kawarabayasi Y."/>
            <person name="Hino Y."/>
            <person name="Horikawa H."/>
            <person name="Yamazaki S."/>
            <person name="Haikawa Y."/>
            <person name="Jin-no K."/>
            <person name="Takahashi M."/>
            <person name="Sekine M."/>
            <person name="Baba S."/>
            <person name="Ankai A."/>
            <person name="Kosugi H."/>
            <person name="Hosoyama A."/>
            <person name="Fukui S."/>
            <person name="Nagai Y."/>
            <person name="Nishijima K."/>
            <person name="Nakazawa H."/>
            <person name="Takamiya M."/>
            <person name="Masuda S."/>
            <person name="Funahashi T."/>
            <person name="Tanaka T."/>
            <person name="Kudoh Y."/>
            <person name="Yamazaki J."/>
            <person name="Kushida N."/>
            <person name="Oguchi A."/>
            <person name="Aoki K."/>
            <person name="Kubota K."/>
            <person name="Nakamura Y."/>
            <person name="Nomura N."/>
            <person name="Sako Y."/>
            <person name="Kikuchi H."/>
        </authorList>
    </citation>
    <scope>NUCLEOTIDE SEQUENCE [LARGE SCALE GENOMIC DNA]</scope>
    <source>
        <strain>ATCC 700893 / DSM 11879 / JCM 9820 / NBRC 100138 / K1</strain>
    </source>
</reference>
<name>PGP_AERPE</name>